<name>PSTC_MYCLE</name>
<feature type="chain" id="PRO_0000060217" description="Phosphate transport system permease protein PstC">
    <location>
        <begin position="1"/>
        <end position="319"/>
    </location>
</feature>
<feature type="transmembrane region" description="Helical" evidence="2">
    <location>
        <begin position="25"/>
        <end position="45"/>
    </location>
</feature>
<feature type="transmembrane region" description="Helical" evidence="2">
    <location>
        <begin position="84"/>
        <end position="104"/>
    </location>
</feature>
<feature type="transmembrane region" description="Helical" evidence="2">
    <location>
        <begin position="120"/>
        <end position="140"/>
    </location>
</feature>
<feature type="transmembrane region" description="Helical" evidence="2">
    <location>
        <begin position="141"/>
        <end position="161"/>
    </location>
</feature>
<feature type="transmembrane region" description="Helical" evidence="2">
    <location>
        <begin position="169"/>
        <end position="189"/>
    </location>
</feature>
<feature type="transmembrane region" description="Helical" evidence="2">
    <location>
        <begin position="233"/>
        <end position="253"/>
    </location>
</feature>
<feature type="transmembrane region" description="Helical" evidence="2">
    <location>
        <begin position="289"/>
        <end position="309"/>
    </location>
</feature>
<feature type="domain" description="ABC transmembrane type-1" evidence="2">
    <location>
        <begin position="80"/>
        <end position="309"/>
    </location>
</feature>
<proteinExistence type="inferred from homology"/>
<comment type="function">
    <text evidence="1">Part of a binding-protein-dependent transport system for phosphate; probably responsible for the translocation of the substrate across the membrane.</text>
</comment>
<comment type="subcellular location">
    <subcellularLocation>
        <location evidence="3">Cell membrane</location>
        <topology evidence="3">Multi-pass membrane protein</topology>
    </subcellularLocation>
</comment>
<comment type="similarity">
    <text evidence="3">Belongs to the binding-protein-dependent transport system permease family. CysTW subfamily.</text>
</comment>
<dbReference type="EMBL" id="U15184">
    <property type="protein sequence ID" value="AAA63077.1"/>
    <property type="molecule type" value="Genomic_DNA"/>
</dbReference>
<dbReference type="EMBL" id="AL583924">
    <property type="protein sequence ID" value="CAC31049.1"/>
    <property type="molecule type" value="Genomic_DNA"/>
</dbReference>
<dbReference type="PIR" id="A87171">
    <property type="entry name" value="A87171"/>
</dbReference>
<dbReference type="RefSeq" id="NP_302394.1">
    <property type="nucleotide sequence ID" value="NC_002677.1"/>
</dbReference>
<dbReference type="RefSeq" id="WP_010908714.1">
    <property type="nucleotide sequence ID" value="NC_002677.1"/>
</dbReference>
<dbReference type="STRING" id="272631.gene:17575946"/>
<dbReference type="KEGG" id="mle:ML2094"/>
<dbReference type="PATRIC" id="fig|272631.5.peg.3940"/>
<dbReference type="Leproma" id="ML2094"/>
<dbReference type="eggNOG" id="COG0573">
    <property type="taxonomic scope" value="Bacteria"/>
</dbReference>
<dbReference type="HOGENOM" id="CLU_033621_1_3_11"/>
<dbReference type="OrthoDB" id="9785113at2"/>
<dbReference type="Proteomes" id="UP000000806">
    <property type="component" value="Chromosome"/>
</dbReference>
<dbReference type="GO" id="GO:0005886">
    <property type="term" value="C:plasma membrane"/>
    <property type="evidence" value="ECO:0007669"/>
    <property type="project" value="UniProtKB-SubCell"/>
</dbReference>
<dbReference type="GO" id="GO:0005315">
    <property type="term" value="F:phosphate transmembrane transporter activity"/>
    <property type="evidence" value="ECO:0007669"/>
    <property type="project" value="InterPro"/>
</dbReference>
<dbReference type="GO" id="GO:0006817">
    <property type="term" value="P:phosphate ion transport"/>
    <property type="evidence" value="ECO:0007669"/>
    <property type="project" value="UniProtKB-KW"/>
</dbReference>
<dbReference type="CDD" id="cd06261">
    <property type="entry name" value="TM_PBP2"/>
    <property type="match status" value="1"/>
</dbReference>
<dbReference type="Gene3D" id="1.10.3720.10">
    <property type="entry name" value="MetI-like"/>
    <property type="match status" value="1"/>
</dbReference>
<dbReference type="InterPro" id="IPR000515">
    <property type="entry name" value="MetI-like"/>
</dbReference>
<dbReference type="InterPro" id="IPR035906">
    <property type="entry name" value="MetI-like_sf"/>
</dbReference>
<dbReference type="InterPro" id="IPR011864">
    <property type="entry name" value="Phosphate_PstC"/>
</dbReference>
<dbReference type="InterPro" id="IPR051124">
    <property type="entry name" value="Phosphate_Transport_Permease"/>
</dbReference>
<dbReference type="NCBIfam" id="TIGR02138">
    <property type="entry name" value="phosphate_pstC"/>
    <property type="match status" value="1"/>
</dbReference>
<dbReference type="PANTHER" id="PTHR30425">
    <property type="entry name" value="PHOSPHATE TRANSPORT SYSTEM PERMEASE PROTEIN PST"/>
    <property type="match status" value="1"/>
</dbReference>
<dbReference type="PANTHER" id="PTHR30425:SF1">
    <property type="entry name" value="PHOSPHATE TRANSPORT SYSTEM PERMEASE PROTEIN PSTC"/>
    <property type="match status" value="1"/>
</dbReference>
<dbReference type="Pfam" id="PF00528">
    <property type="entry name" value="BPD_transp_1"/>
    <property type="match status" value="1"/>
</dbReference>
<dbReference type="SUPFAM" id="SSF161098">
    <property type="entry name" value="MetI-like"/>
    <property type="match status" value="1"/>
</dbReference>
<dbReference type="PROSITE" id="PS50928">
    <property type="entry name" value="ABC_TM1"/>
    <property type="match status" value="1"/>
</dbReference>
<sequence>MIKPTPAAVGSYVTRRCDRLFKSAAAAAGSTVVAAILLIAIFLLLRAVPSLRANHANFFTSAKFDTTGDKNLAFGIRDLFMVTVLSSICALVLAVPVAIGIAVFLTQYVPARLSRLFSAMVDLLAAVPSIIFGLWGVFVLAPKLQPIAVFLNHNLGWLFLFKQGNVSLAGGGTIFTSGIVLAVMILPIVTSVSREVFRHTPLIQIEAAQALGATKWEVVQMTVLPFGRSGVAAAAMLGLGRALGETLAVLIILRSAARSGNWSLFDGGYTFASKIASAASEFSQPLPTGAYIAAGFALFFLTFVVNAVARAISGGRVNG</sequence>
<gene>
    <name type="primary">pstC</name>
    <name type="synonym">phoW1</name>
    <name type="synonym">pstC2</name>
    <name type="ordered locus">ML2094</name>
</gene>
<organism>
    <name type="scientific">Mycobacterium leprae (strain TN)</name>
    <dbReference type="NCBI Taxonomy" id="272631"/>
    <lineage>
        <taxon>Bacteria</taxon>
        <taxon>Bacillati</taxon>
        <taxon>Actinomycetota</taxon>
        <taxon>Actinomycetes</taxon>
        <taxon>Mycobacteriales</taxon>
        <taxon>Mycobacteriaceae</taxon>
        <taxon>Mycobacterium</taxon>
    </lineage>
</organism>
<reference key="1">
    <citation type="submission" date="1994-09" db="EMBL/GenBank/DDBJ databases">
        <authorList>
            <person name="Smith D.R."/>
            <person name="Robison K."/>
        </authorList>
    </citation>
    <scope>NUCLEOTIDE SEQUENCE [GENOMIC DNA]</scope>
</reference>
<reference key="2">
    <citation type="journal article" date="2001" name="Nature">
        <title>Massive gene decay in the leprosy bacillus.</title>
        <authorList>
            <person name="Cole S.T."/>
            <person name="Eiglmeier K."/>
            <person name="Parkhill J."/>
            <person name="James K.D."/>
            <person name="Thomson N.R."/>
            <person name="Wheeler P.R."/>
            <person name="Honore N."/>
            <person name="Garnier T."/>
            <person name="Churcher C.M."/>
            <person name="Harris D.E."/>
            <person name="Mungall K.L."/>
            <person name="Basham D."/>
            <person name="Brown D."/>
            <person name="Chillingworth T."/>
            <person name="Connor R."/>
            <person name="Davies R.M."/>
            <person name="Devlin K."/>
            <person name="Duthoy S."/>
            <person name="Feltwell T."/>
            <person name="Fraser A."/>
            <person name="Hamlin N."/>
            <person name="Holroyd S."/>
            <person name="Hornsby T."/>
            <person name="Jagels K."/>
            <person name="Lacroix C."/>
            <person name="Maclean J."/>
            <person name="Moule S."/>
            <person name="Murphy L.D."/>
            <person name="Oliver K."/>
            <person name="Quail M.A."/>
            <person name="Rajandream M.A."/>
            <person name="Rutherford K.M."/>
            <person name="Rutter S."/>
            <person name="Seeger K."/>
            <person name="Simon S."/>
            <person name="Simmonds M."/>
            <person name="Skelton J."/>
            <person name="Squares R."/>
            <person name="Squares S."/>
            <person name="Stevens K."/>
            <person name="Taylor K."/>
            <person name="Whitehead S."/>
            <person name="Woodward J.R."/>
            <person name="Barrell B.G."/>
        </authorList>
    </citation>
    <scope>NUCLEOTIDE SEQUENCE [LARGE SCALE GENOMIC DNA]</scope>
    <source>
        <strain>TN</strain>
    </source>
</reference>
<accession>Q50098</accession>
<protein>
    <recommendedName>
        <fullName>Phosphate transport system permease protein PstC</fullName>
    </recommendedName>
</protein>
<evidence type="ECO:0000250" key="1"/>
<evidence type="ECO:0000255" key="2">
    <source>
        <dbReference type="PROSITE-ProRule" id="PRU00441"/>
    </source>
</evidence>
<evidence type="ECO:0000305" key="3"/>
<keyword id="KW-1003">Cell membrane</keyword>
<keyword id="KW-0472">Membrane</keyword>
<keyword id="KW-0592">Phosphate transport</keyword>
<keyword id="KW-1185">Reference proteome</keyword>
<keyword id="KW-0812">Transmembrane</keyword>
<keyword id="KW-1133">Transmembrane helix</keyword>
<keyword id="KW-0813">Transport</keyword>